<gene>
    <name evidence="1" type="primary">aaeX</name>
    <name type="ordered locus">ECS88_3618</name>
</gene>
<proteinExistence type="inferred from homology"/>
<evidence type="ECO:0000255" key="1">
    <source>
        <dbReference type="HAMAP-Rule" id="MF_01546"/>
    </source>
</evidence>
<reference key="1">
    <citation type="journal article" date="2009" name="PLoS Genet.">
        <title>Organised genome dynamics in the Escherichia coli species results in highly diverse adaptive paths.</title>
        <authorList>
            <person name="Touchon M."/>
            <person name="Hoede C."/>
            <person name="Tenaillon O."/>
            <person name="Barbe V."/>
            <person name="Baeriswyl S."/>
            <person name="Bidet P."/>
            <person name="Bingen E."/>
            <person name="Bonacorsi S."/>
            <person name="Bouchier C."/>
            <person name="Bouvet O."/>
            <person name="Calteau A."/>
            <person name="Chiapello H."/>
            <person name="Clermont O."/>
            <person name="Cruveiller S."/>
            <person name="Danchin A."/>
            <person name="Diard M."/>
            <person name="Dossat C."/>
            <person name="Karoui M.E."/>
            <person name="Frapy E."/>
            <person name="Garry L."/>
            <person name="Ghigo J.M."/>
            <person name="Gilles A.M."/>
            <person name="Johnson J."/>
            <person name="Le Bouguenec C."/>
            <person name="Lescat M."/>
            <person name="Mangenot S."/>
            <person name="Martinez-Jehanne V."/>
            <person name="Matic I."/>
            <person name="Nassif X."/>
            <person name="Oztas S."/>
            <person name="Petit M.A."/>
            <person name="Pichon C."/>
            <person name="Rouy Z."/>
            <person name="Ruf C.S."/>
            <person name="Schneider D."/>
            <person name="Tourret J."/>
            <person name="Vacherie B."/>
            <person name="Vallenet D."/>
            <person name="Medigue C."/>
            <person name="Rocha E.P.C."/>
            <person name="Denamur E."/>
        </authorList>
    </citation>
    <scope>NUCLEOTIDE SEQUENCE [LARGE SCALE GENOMIC DNA]</scope>
    <source>
        <strain>S88 / ExPEC</strain>
    </source>
</reference>
<accession>B7MC03</accession>
<name>AAEX_ECO45</name>
<organism>
    <name type="scientific">Escherichia coli O45:K1 (strain S88 / ExPEC)</name>
    <dbReference type="NCBI Taxonomy" id="585035"/>
    <lineage>
        <taxon>Bacteria</taxon>
        <taxon>Pseudomonadati</taxon>
        <taxon>Pseudomonadota</taxon>
        <taxon>Gammaproteobacteria</taxon>
        <taxon>Enterobacterales</taxon>
        <taxon>Enterobacteriaceae</taxon>
        <taxon>Escherichia</taxon>
    </lineage>
</organism>
<sequence>MSLFPVIVVFGLSFPPIFFELLLSLAIFWLVRRVLVPTGIYDFVWHPALFNTALYCCLFYLISRLFV</sequence>
<keyword id="KW-1003">Cell membrane</keyword>
<keyword id="KW-0472">Membrane</keyword>
<keyword id="KW-1185">Reference proteome</keyword>
<keyword id="KW-0812">Transmembrane</keyword>
<keyword id="KW-1133">Transmembrane helix</keyword>
<protein>
    <recommendedName>
        <fullName evidence="1">Protein AaeX</fullName>
    </recommendedName>
</protein>
<feature type="chain" id="PRO_1000146752" description="Protein AaeX">
    <location>
        <begin position="1"/>
        <end position="67"/>
    </location>
</feature>
<feature type="transmembrane region" description="Helical" evidence="1">
    <location>
        <begin position="3"/>
        <end position="23"/>
    </location>
</feature>
<feature type="transmembrane region" description="Helical" evidence="1">
    <location>
        <begin position="43"/>
        <end position="63"/>
    </location>
</feature>
<comment type="subcellular location">
    <subcellularLocation>
        <location evidence="1">Cell membrane</location>
        <topology evidence="1">Multi-pass membrane protein</topology>
    </subcellularLocation>
</comment>
<comment type="induction">
    <text evidence="1">Positively coregulated with aaeA and aaeB by AaeR.</text>
</comment>
<comment type="similarity">
    <text evidence="1">Belongs to the AaeX family.</text>
</comment>
<dbReference type="EMBL" id="CU928161">
    <property type="protein sequence ID" value="CAR04844.1"/>
    <property type="molecule type" value="Genomic_DNA"/>
</dbReference>
<dbReference type="RefSeq" id="WP_000051841.1">
    <property type="nucleotide sequence ID" value="NC_011742.1"/>
</dbReference>
<dbReference type="GeneID" id="93778743"/>
<dbReference type="KEGG" id="ecz:ECS88_3618"/>
<dbReference type="HOGENOM" id="CLU_188292_0_0_6"/>
<dbReference type="Proteomes" id="UP000000747">
    <property type="component" value="Chromosome"/>
</dbReference>
<dbReference type="GO" id="GO:0005886">
    <property type="term" value="C:plasma membrane"/>
    <property type="evidence" value="ECO:0007669"/>
    <property type="project" value="UniProtKB-SubCell"/>
</dbReference>
<dbReference type="HAMAP" id="MF_01546">
    <property type="entry name" value="AaeX"/>
    <property type="match status" value="1"/>
</dbReference>
<dbReference type="InterPro" id="IPR012451">
    <property type="entry name" value="DUF1656"/>
</dbReference>
<dbReference type="NCBIfam" id="NF008615">
    <property type="entry name" value="PRK11594.1"/>
    <property type="match status" value="1"/>
</dbReference>
<dbReference type="Pfam" id="PF07869">
    <property type="entry name" value="DUF1656"/>
    <property type="match status" value="1"/>
</dbReference>